<keyword id="KW-0963">Cytoplasm</keyword>
<keyword id="KW-0648">Protein biosynthesis</keyword>
<dbReference type="EMBL" id="CP000789">
    <property type="protein sequence ID" value="ABU72183.1"/>
    <property type="molecule type" value="Genomic_DNA"/>
</dbReference>
<dbReference type="RefSeq" id="WP_012128696.1">
    <property type="nucleotide sequence ID" value="NC_022269.1"/>
</dbReference>
<dbReference type="SMR" id="A7MXZ7"/>
<dbReference type="KEGG" id="vha:VIBHAR_03234"/>
<dbReference type="PATRIC" id="fig|338187.25.peg.2956"/>
<dbReference type="Proteomes" id="UP000008152">
    <property type="component" value="Chromosome I"/>
</dbReference>
<dbReference type="GO" id="GO:0005829">
    <property type="term" value="C:cytosol"/>
    <property type="evidence" value="ECO:0007669"/>
    <property type="project" value="GOC"/>
</dbReference>
<dbReference type="GO" id="GO:0043023">
    <property type="term" value="F:ribosomal large subunit binding"/>
    <property type="evidence" value="ECO:0007669"/>
    <property type="project" value="TreeGrafter"/>
</dbReference>
<dbReference type="GO" id="GO:0002184">
    <property type="term" value="P:cytoplasmic translational termination"/>
    <property type="evidence" value="ECO:0007669"/>
    <property type="project" value="TreeGrafter"/>
</dbReference>
<dbReference type="CDD" id="cd00520">
    <property type="entry name" value="RRF"/>
    <property type="match status" value="1"/>
</dbReference>
<dbReference type="FunFam" id="1.10.132.20:FF:000001">
    <property type="entry name" value="Ribosome-recycling factor"/>
    <property type="match status" value="1"/>
</dbReference>
<dbReference type="FunFam" id="3.30.1360.40:FF:000001">
    <property type="entry name" value="Ribosome-recycling factor"/>
    <property type="match status" value="1"/>
</dbReference>
<dbReference type="Gene3D" id="3.30.1360.40">
    <property type="match status" value="1"/>
</dbReference>
<dbReference type="Gene3D" id="1.10.132.20">
    <property type="entry name" value="Ribosome-recycling factor"/>
    <property type="match status" value="1"/>
</dbReference>
<dbReference type="HAMAP" id="MF_00040">
    <property type="entry name" value="RRF"/>
    <property type="match status" value="1"/>
</dbReference>
<dbReference type="InterPro" id="IPR002661">
    <property type="entry name" value="Ribosome_recyc_fac"/>
</dbReference>
<dbReference type="InterPro" id="IPR023584">
    <property type="entry name" value="Ribosome_recyc_fac_dom"/>
</dbReference>
<dbReference type="InterPro" id="IPR036191">
    <property type="entry name" value="RRF_sf"/>
</dbReference>
<dbReference type="NCBIfam" id="TIGR00496">
    <property type="entry name" value="frr"/>
    <property type="match status" value="1"/>
</dbReference>
<dbReference type="PANTHER" id="PTHR20982:SF3">
    <property type="entry name" value="MITOCHONDRIAL RIBOSOME RECYCLING FACTOR PSEUDO 1"/>
    <property type="match status" value="1"/>
</dbReference>
<dbReference type="PANTHER" id="PTHR20982">
    <property type="entry name" value="RIBOSOME RECYCLING FACTOR"/>
    <property type="match status" value="1"/>
</dbReference>
<dbReference type="Pfam" id="PF01765">
    <property type="entry name" value="RRF"/>
    <property type="match status" value="1"/>
</dbReference>
<dbReference type="SUPFAM" id="SSF55194">
    <property type="entry name" value="Ribosome recycling factor, RRF"/>
    <property type="match status" value="1"/>
</dbReference>
<organism>
    <name type="scientific">Vibrio campbellii (strain ATCC BAA-1116)</name>
    <dbReference type="NCBI Taxonomy" id="2902295"/>
    <lineage>
        <taxon>Bacteria</taxon>
        <taxon>Pseudomonadati</taxon>
        <taxon>Pseudomonadota</taxon>
        <taxon>Gammaproteobacteria</taxon>
        <taxon>Vibrionales</taxon>
        <taxon>Vibrionaceae</taxon>
        <taxon>Vibrio</taxon>
    </lineage>
</organism>
<name>RRF_VIBC1</name>
<evidence type="ECO:0000255" key="1">
    <source>
        <dbReference type="HAMAP-Rule" id="MF_00040"/>
    </source>
</evidence>
<protein>
    <recommendedName>
        <fullName evidence="1">Ribosome-recycling factor</fullName>
        <shortName evidence="1">RRF</shortName>
    </recommendedName>
    <alternativeName>
        <fullName evidence="1">Ribosome-releasing factor</fullName>
    </alternativeName>
</protein>
<feature type="chain" id="PRO_1000003309" description="Ribosome-recycling factor">
    <location>
        <begin position="1"/>
        <end position="185"/>
    </location>
</feature>
<sequence>MINEINKDAQERMDKSVEALKNNLSKVRTGRAHPSLLSGISVEYYGAPTPLNQVANVVAEDARTLAITVFDKELTQKVEKAIMMSDLGLNPMSAGTIIRVPLPPLTEERRKDLVKIVRGEAEGSRVAVRNIRRDANSDLKGLLKDKEISEDEDRKAQDEIQKLTDVAVKKIDEVLAAKEKELMEV</sequence>
<gene>
    <name evidence="1" type="primary">frr</name>
    <name type="ordered locus">VIBHAR_03234</name>
</gene>
<reference key="1">
    <citation type="submission" date="2007-08" db="EMBL/GenBank/DDBJ databases">
        <authorList>
            <consortium name="The Vibrio harveyi Genome Sequencing Project"/>
            <person name="Bassler B."/>
            <person name="Clifton S.W."/>
            <person name="Fulton L."/>
            <person name="Delehaunty K."/>
            <person name="Fronick C."/>
            <person name="Harrison M."/>
            <person name="Markivic C."/>
            <person name="Fulton R."/>
            <person name="Tin-Wollam A.-M."/>
            <person name="Shah N."/>
            <person name="Pepin K."/>
            <person name="Nash W."/>
            <person name="Thiruvilangam P."/>
            <person name="Bhonagiri V."/>
            <person name="Waters C."/>
            <person name="Tu K.C."/>
            <person name="Irgon J."/>
            <person name="Wilson R.K."/>
        </authorList>
    </citation>
    <scope>NUCLEOTIDE SEQUENCE [LARGE SCALE GENOMIC DNA]</scope>
    <source>
        <strain>ATCC BAA-1116 / BB120</strain>
    </source>
</reference>
<comment type="function">
    <text evidence="1">Responsible for the release of ribosomes from messenger RNA at the termination of protein biosynthesis. May increase the efficiency of translation by recycling ribosomes from one round of translation to another.</text>
</comment>
<comment type="subcellular location">
    <subcellularLocation>
        <location evidence="1">Cytoplasm</location>
    </subcellularLocation>
</comment>
<comment type="similarity">
    <text evidence="1">Belongs to the RRF family.</text>
</comment>
<proteinExistence type="inferred from homology"/>
<accession>A7MXZ7</accession>